<keyword id="KW-0067">ATP-binding</keyword>
<keyword id="KW-0903">Direct protein sequencing</keyword>
<keyword id="KW-0408">Iron</keyword>
<keyword id="KW-0411">Iron-sulfur</keyword>
<keyword id="KW-0479">Metal-binding</keyword>
<keyword id="KW-0535">Nitrogen fixation</keyword>
<keyword id="KW-0547">Nucleotide-binding</keyword>
<keyword id="KW-0560">Oxidoreductase</keyword>
<keyword id="KW-0837">Vanadium</keyword>
<gene>
    <name type="primary">vnfD</name>
</gene>
<name>VNFD_AZOCH</name>
<organism>
    <name type="scientific">Azotobacter chroococcum mcd 1</name>
    <dbReference type="NCBI Taxonomy" id="355"/>
    <lineage>
        <taxon>Bacteria</taxon>
        <taxon>Pseudomonadati</taxon>
        <taxon>Pseudomonadota</taxon>
        <taxon>Gammaproteobacteria</taxon>
        <taxon>Pseudomonadales</taxon>
        <taxon>Pseudomonadaceae</taxon>
        <taxon>Azotobacter</taxon>
    </lineage>
</organism>
<feature type="initiator methionine" description="Removed" evidence="2">
    <location>
        <position position="1"/>
    </location>
</feature>
<feature type="chain" id="PRO_0000153055" description="Nitrogenase vanadium-iron protein alpha chain">
    <location>
        <begin position="2"/>
        <end position="473"/>
    </location>
</feature>
<feature type="binding site" evidence="1">
    <location>
        <position position="49"/>
    </location>
    <ligand>
        <name>[8Fe-7S] cluster</name>
        <dbReference type="ChEBI" id="CHEBI:21143"/>
        <note>ligand shared with beta chain</note>
    </ligand>
</feature>
<feature type="binding site" evidence="1">
    <location>
        <position position="74"/>
    </location>
    <ligand>
        <name>[8Fe-7S] cluster</name>
        <dbReference type="ChEBI" id="CHEBI:21143"/>
        <note>ligand shared with beta chain</note>
    </ligand>
</feature>
<feature type="binding site" evidence="1">
    <location>
        <position position="137"/>
    </location>
    <ligand>
        <name>[8Fe-7S] cluster</name>
        <dbReference type="ChEBI" id="CHEBI:21143"/>
        <note>ligand shared with beta chain</note>
    </ligand>
</feature>
<feature type="binding site" evidence="1">
    <location>
        <position position="256"/>
    </location>
    <ligand>
        <name>[7Fe-V-9S-C-homocitryl] cluster</name>
        <dbReference type="ChEBI" id="CHEBI:60357"/>
    </ligand>
</feature>
<feature type="binding site" evidence="1">
    <location>
        <position position="422"/>
    </location>
    <ligand>
        <name>[7Fe-V-9S-C-homocitryl] cluster</name>
        <dbReference type="ChEBI" id="CHEBI:60357"/>
    </ligand>
</feature>
<feature type="sequence conflict" description="In Ref. 1; CAA36058." evidence="3" ref="1">
    <original>LLRR</original>
    <variation>AFCGA</variation>
    <location>
        <begin position="50"/>
        <end position="53"/>
    </location>
</feature>
<sequence length="473" mass="53993">MPMVLLECDKDIPERQKHIYLKAPNEDTREFLPIANAATIPGTLSERGCLLRRKLVIGGVLKDTIQMIHGPLGCAYDTWHTKRYPTDNGHFNMKYVWSTDMKESHVVFGGEKRLEQRMHEAFDEMPDIKRMIVYTTCPTALIGDDIKAVAKKVMKERPDVDVFTVECPGFSGVSQSKGHHVLNIGWINEKVETMEKEITSEYTMNFIGDFNIQGDTQLLQTYWDRLGIQVVAHFTGNGTYDDLRCMHQAQLNVVNCARSSGYIANELKKRYGIPRLDIDSWGFSYMAEGIRKICAFFGIEEKGERLIAEEYAKWKPKLDWYKERLQGKKMAIWTGGPRLWHWTKSVEDDLGIQVVAMSSKFGHEEDFEKVIARGKEGTYYIDDGNELEFFEIIDLVKPDVIFTGPRVGELVKKLHIPYVNGHGYHNGPYMGFEGFVNLARDTYNAVHNPLRHLAAVDIRDSSQTTPVIVRGAA</sequence>
<proteinExistence type="evidence at protein level"/>
<comment type="function">
    <text>This vanadium-iron protein is part of the nitrogenase complex that catalyzes the key enzymatic reactions in nitrogen fixation.</text>
</comment>
<comment type="catalytic activity">
    <reaction>
        <text>N2 + 8 reduced [2Fe-2S]-[ferredoxin] + 16 ATP + 16 H2O = H2 + 8 oxidized [2Fe-2S]-[ferredoxin] + 2 NH4(+) + 16 ADP + 16 phosphate + 6 H(+)</text>
        <dbReference type="Rhea" id="RHEA:21448"/>
        <dbReference type="Rhea" id="RHEA-COMP:10000"/>
        <dbReference type="Rhea" id="RHEA-COMP:10001"/>
        <dbReference type="ChEBI" id="CHEBI:15377"/>
        <dbReference type="ChEBI" id="CHEBI:15378"/>
        <dbReference type="ChEBI" id="CHEBI:17997"/>
        <dbReference type="ChEBI" id="CHEBI:18276"/>
        <dbReference type="ChEBI" id="CHEBI:28938"/>
        <dbReference type="ChEBI" id="CHEBI:30616"/>
        <dbReference type="ChEBI" id="CHEBI:33737"/>
        <dbReference type="ChEBI" id="CHEBI:33738"/>
        <dbReference type="ChEBI" id="CHEBI:43474"/>
        <dbReference type="ChEBI" id="CHEBI:456216"/>
        <dbReference type="EC" id="1.18.6.1"/>
    </reaction>
</comment>
<comment type="cofactor">
    <cofactor evidence="1">
        <name>[8Fe-7S] cluster</name>
        <dbReference type="ChEBI" id="CHEBI:21143"/>
    </cofactor>
    <text evidence="1">Binds 1 [8Fe-7S] cluster per heterodimer.</text>
</comment>
<comment type="cofactor">
    <cofactor evidence="1">
        <name>[7Fe-V-9S-C-homocitryl] cluster</name>
        <dbReference type="ChEBI" id="CHEBI:60357"/>
    </cofactor>
    <text evidence="1">Binds 1 [7Fe-V-9S-C-homocitryl] cluster per subunit.</text>
</comment>
<comment type="subunit">
    <text>Hexamer of two alpha, two beta, and two delta chains.</text>
</comment>
<comment type="miscellaneous">
    <text>The structure of the 7Fe-V-9S-C-homocitryl cluster is assumed to be analogous to the 7Fe-Mo-9S-C-homocitryl cluster.</text>
</comment>
<comment type="similarity">
    <text evidence="3">Belongs to the NifD/NifK/NifE/NifN family.</text>
</comment>
<protein>
    <recommendedName>
        <fullName>Nitrogenase vanadium-iron protein alpha chain</fullName>
        <ecNumber>1.18.6.1</ecNumber>
    </recommendedName>
    <alternativeName>
        <fullName>Dinitrogenase 2 subunit alpha</fullName>
    </alternativeName>
    <alternativeName>
        <fullName>Nitrogenase component I</fullName>
    </alternativeName>
</protein>
<accession>P15332</accession>
<dbReference type="EC" id="1.18.6.1"/>
<dbReference type="EMBL" id="X51756">
    <property type="protein sequence ID" value="CAA36058.1"/>
    <property type="molecule type" value="Genomic_DNA"/>
</dbReference>
<dbReference type="EMBL" id="X15077">
    <property type="protein sequence ID" value="CAA33173.1"/>
    <property type="molecule type" value="Genomic_DNA"/>
</dbReference>
<dbReference type="PIR" id="S04113">
    <property type="entry name" value="S04113"/>
</dbReference>
<dbReference type="SMR" id="P15332"/>
<dbReference type="BRENDA" id="1.18.6.2">
    <property type="organism ID" value="617"/>
</dbReference>
<dbReference type="GO" id="GO:0005524">
    <property type="term" value="F:ATP binding"/>
    <property type="evidence" value="ECO:0007669"/>
    <property type="project" value="UniProtKB-KW"/>
</dbReference>
<dbReference type="GO" id="GO:0051536">
    <property type="term" value="F:iron-sulfur cluster binding"/>
    <property type="evidence" value="ECO:0007669"/>
    <property type="project" value="UniProtKB-KW"/>
</dbReference>
<dbReference type="GO" id="GO:0016163">
    <property type="term" value="F:nitrogenase activity"/>
    <property type="evidence" value="ECO:0007669"/>
    <property type="project" value="UniProtKB-EC"/>
</dbReference>
<dbReference type="GO" id="GO:0051212">
    <property type="term" value="F:vanadium ion binding"/>
    <property type="evidence" value="ECO:0007669"/>
    <property type="project" value="InterPro"/>
</dbReference>
<dbReference type="GO" id="GO:0009399">
    <property type="term" value="P:nitrogen fixation"/>
    <property type="evidence" value="ECO:0007669"/>
    <property type="project" value="UniProtKB-KW"/>
</dbReference>
<dbReference type="CDD" id="cd01977">
    <property type="entry name" value="Nitrogenase_VFe_alpha"/>
    <property type="match status" value="1"/>
</dbReference>
<dbReference type="Gene3D" id="3.40.50.1980">
    <property type="entry name" value="Nitrogenase molybdenum iron protein domain"/>
    <property type="match status" value="3"/>
</dbReference>
<dbReference type="InterPro" id="IPR000510">
    <property type="entry name" value="Nase/OxRdtase_comp1"/>
</dbReference>
<dbReference type="InterPro" id="IPR005974">
    <property type="entry name" value="Nase_asu"/>
</dbReference>
<dbReference type="InterPro" id="IPR010143">
    <property type="entry name" value="Nase_comp1_asu"/>
</dbReference>
<dbReference type="InterPro" id="IPR000318">
    <property type="entry name" value="Nase_comp1_CS"/>
</dbReference>
<dbReference type="InterPro" id="IPR010142">
    <property type="entry name" value="Nase_V-Fe_asu"/>
</dbReference>
<dbReference type="NCBIfam" id="TIGR01284">
    <property type="entry name" value="alt_nitrog_alph"/>
    <property type="match status" value="1"/>
</dbReference>
<dbReference type="NCBIfam" id="TIGR01862">
    <property type="entry name" value="N2-ase-Ialpha"/>
    <property type="match status" value="1"/>
</dbReference>
<dbReference type="NCBIfam" id="TIGR01860">
    <property type="entry name" value="VNFD"/>
    <property type="match status" value="1"/>
</dbReference>
<dbReference type="PANTHER" id="PTHR43457">
    <property type="entry name" value="NITROGENASE MOLYBDENUM-IRON PROTEIN ALPHA CHAIN"/>
    <property type="match status" value="1"/>
</dbReference>
<dbReference type="PANTHER" id="PTHR43457:SF1">
    <property type="entry name" value="NITROGENASE MOLYBDENUM-IRON PROTEIN ALPHA CHAIN"/>
    <property type="match status" value="1"/>
</dbReference>
<dbReference type="Pfam" id="PF00148">
    <property type="entry name" value="Oxidored_nitro"/>
    <property type="match status" value="1"/>
</dbReference>
<dbReference type="SUPFAM" id="SSF53807">
    <property type="entry name" value="Helical backbone' metal receptor"/>
    <property type="match status" value="1"/>
</dbReference>
<dbReference type="PROSITE" id="PS00699">
    <property type="entry name" value="NITROGENASE_1_1"/>
    <property type="match status" value="1"/>
</dbReference>
<dbReference type="PROSITE" id="PS00090">
    <property type="entry name" value="NITROGENASE_1_2"/>
    <property type="match status" value="1"/>
</dbReference>
<evidence type="ECO:0000250" key="1"/>
<evidence type="ECO:0000269" key="2">
    <source>
    </source>
</evidence>
<evidence type="ECO:0000305" key="3"/>
<reference key="1">
    <citation type="journal article" date="1990" name="Nucleic Acids Res.">
        <title>Completed sequence of the region encoding the structural genes for the vanadium nitrogenase of Azotobacter chroococcum.</title>
        <authorList>
            <person name="Fallik E."/>
            <person name="Robson R.L."/>
        </authorList>
    </citation>
    <scope>NUCLEOTIDE SEQUENCE [GENOMIC DNA]</scope>
</reference>
<reference key="2">
    <citation type="journal article" date="1989" name="EMBO J.">
        <title>Structural genes for the vanadium nitrogenase from Azotobacter chroococcum.</title>
        <authorList>
            <person name="Robson R.L."/>
            <person name="Woodley P.R."/>
            <person name="Pau R.N."/>
            <person name="Eady R.R."/>
        </authorList>
    </citation>
    <scope>NUCLEOTIDE SEQUENCE [GENOMIC DNA]</scope>
    <scope>PROTEIN SEQUENCE OF 2-11</scope>
</reference>